<sequence length="678" mass="77544">MSLSNNQTQFVTVFVPIQLSIDVFRKMNNINSFVNDNLTNFPIVTVDQLIKVVNNNNNNNNNNNNNNNNNNNNTSISNNGDINNCLATFEQVQNNCFETCDFKATEREHYFASGKQIQESVLPEEEEEKISVNNFAMVTVEPNNCFVKAQQINSVAPLSLDNRNCVRRAHREVNTFVQVFDVCVFNLKVVNVATNESQVNLFNGGNVENICFDRSIQMPRSSADDFDWSSQQQSSWYSLALSIIPIYHEIILVLCNWLVVAFYKYWQHQQQKQLPPHPLNIIVPNVSKRIAVNLNNQLISLTFTNFLKNIFFLNNNNNNNNNNNNNNNNNNNNNNNNNNNNKTNNNQLNLSKEICNENLNFEEFNFEDESVCKYNRLTNSCENISKIQQVNEESELLDWFSDFEEMDSVLLQNGTEFDNDHPMVKSQAPSITFKSLDQFIKYLEENNCVDDIEVSPCSKSHTFNRPVSTPRLIIKPTWCVYGDSLNTEFFHSCLKDKTCGDIIVDHFEPLVSSPTDFLLSNGGQRILDTPNAGGSSVWSEVLSFEVLNQVFGAQLKKTETEIEYAPGSKITDFSVDINNSHIGVSVVRIINFFDLNGRTYKAVFTPEYARNLLYKKLFGVIASTEAVVDKWEKQILYVWTTSSCVADIIVQEYWKVPAKLRSNTLVYVNHATNSEFLF</sequence>
<gene>
    <name type="primary">AAC4</name>
    <name type="ORF">DDB_G0267458</name>
</gene>
<evidence type="ECO:0000255" key="1"/>
<evidence type="ECO:0000256" key="2">
    <source>
        <dbReference type="SAM" id="MobiDB-lite"/>
    </source>
</evidence>
<evidence type="ECO:0000269" key="3">
    <source>
    </source>
</evidence>
<evidence type="ECO:0000305" key="4"/>
<proteinExistence type="evidence at transcript level"/>
<reference key="1">
    <citation type="journal article" date="2005" name="Nature">
        <title>The genome of the social amoeba Dictyostelium discoideum.</title>
        <authorList>
            <person name="Eichinger L."/>
            <person name="Pachebat J.A."/>
            <person name="Gloeckner G."/>
            <person name="Rajandream M.A."/>
            <person name="Sucgang R."/>
            <person name="Berriman M."/>
            <person name="Song J."/>
            <person name="Olsen R."/>
            <person name="Szafranski K."/>
            <person name="Xu Q."/>
            <person name="Tunggal B."/>
            <person name="Kummerfeld S."/>
            <person name="Madera M."/>
            <person name="Konfortov B.A."/>
            <person name="Rivero F."/>
            <person name="Bankier A.T."/>
            <person name="Lehmann R."/>
            <person name="Hamlin N."/>
            <person name="Davies R."/>
            <person name="Gaudet P."/>
            <person name="Fey P."/>
            <person name="Pilcher K."/>
            <person name="Chen G."/>
            <person name="Saunders D."/>
            <person name="Sodergren E.J."/>
            <person name="Davis P."/>
            <person name="Kerhornou A."/>
            <person name="Nie X."/>
            <person name="Hall N."/>
            <person name="Anjard C."/>
            <person name="Hemphill L."/>
            <person name="Bason N."/>
            <person name="Farbrother P."/>
            <person name="Desany B."/>
            <person name="Just E."/>
            <person name="Morio T."/>
            <person name="Rost R."/>
            <person name="Churcher C.M."/>
            <person name="Cooper J."/>
            <person name="Haydock S."/>
            <person name="van Driessche N."/>
            <person name="Cronin A."/>
            <person name="Goodhead I."/>
            <person name="Muzny D.M."/>
            <person name="Mourier T."/>
            <person name="Pain A."/>
            <person name="Lu M."/>
            <person name="Harper D."/>
            <person name="Lindsay R."/>
            <person name="Hauser H."/>
            <person name="James K.D."/>
            <person name="Quiles M."/>
            <person name="Madan Babu M."/>
            <person name="Saito T."/>
            <person name="Buchrieser C."/>
            <person name="Wardroper A."/>
            <person name="Felder M."/>
            <person name="Thangavelu M."/>
            <person name="Johnson D."/>
            <person name="Knights A."/>
            <person name="Loulseged H."/>
            <person name="Mungall K.L."/>
            <person name="Oliver K."/>
            <person name="Price C."/>
            <person name="Quail M.A."/>
            <person name="Urushihara H."/>
            <person name="Hernandez J."/>
            <person name="Rabbinowitsch E."/>
            <person name="Steffen D."/>
            <person name="Sanders M."/>
            <person name="Ma J."/>
            <person name="Kohara Y."/>
            <person name="Sharp S."/>
            <person name="Simmonds M.N."/>
            <person name="Spiegler S."/>
            <person name="Tivey A."/>
            <person name="Sugano S."/>
            <person name="White B."/>
            <person name="Walker D."/>
            <person name="Woodward J.R."/>
            <person name="Winckler T."/>
            <person name="Tanaka Y."/>
            <person name="Shaulsky G."/>
            <person name="Schleicher M."/>
            <person name="Weinstock G.M."/>
            <person name="Rosenthal A."/>
            <person name="Cox E.C."/>
            <person name="Chisholm R.L."/>
            <person name="Gibbs R.A."/>
            <person name="Loomis W.F."/>
            <person name="Platzer M."/>
            <person name="Kay R.R."/>
            <person name="Williams J.G."/>
            <person name="Dear P.H."/>
            <person name="Noegel A.A."/>
            <person name="Barrell B.G."/>
            <person name="Kuspa A."/>
        </authorList>
    </citation>
    <scope>NUCLEOTIDE SEQUENCE [LARGE SCALE GENOMIC DNA]</scope>
    <source>
        <strain>AX4</strain>
    </source>
</reference>
<reference key="2">
    <citation type="journal article" date="1989" name="Mol. Gen. Genet.">
        <title>Nucleotide sequences of Dictyostelium discoideum developmentally regulated cDNAs rich in (AAC) imply proteins that contain clusters of asparagine, glutamine, or threonine.</title>
        <authorList>
            <person name="Shaw D.R."/>
            <person name="Richter H."/>
            <person name="Giorda R."/>
            <person name="Ohmachi T."/>
            <person name="Ennis H.L."/>
        </authorList>
    </citation>
    <scope>NUCLEOTIDE SEQUENCE [MRNA] OF 1-312</scope>
    <scope>DEVELOPMENTAL STAGE</scope>
</reference>
<comment type="subcellular location">
    <subcellularLocation>
        <location evidence="4">Membrane</location>
        <topology evidence="4">Single-pass membrane protein</topology>
    </subcellularLocation>
</comment>
<comment type="developmental stage">
    <text evidence="3">The concentration of AAC-rich mRNAs is low in dormant spores and growing cells, but increases during spore-germination and multicellular development.</text>
</comment>
<comment type="miscellaneous">
    <text>Several proteins derive from AAC-rich mRNA, which, due to a frameshift also have ACA and CAA codons and thus are Asn-, Thr- or Gln-rich.</text>
</comment>
<comment type="sequence caution" evidence="4">
    <conflict type="frameshift">
        <sequence resource="EMBL-CDS" id="CAA34530"/>
    </conflict>
</comment>
<feature type="chain" id="PRO_0000064414" description="AAC-rich mRNA clone AAC4 protein">
    <location>
        <begin position="1"/>
        <end position="678"/>
    </location>
</feature>
<feature type="transmembrane region" description="Helical" evidence="1">
    <location>
        <begin position="243"/>
        <end position="263"/>
    </location>
</feature>
<feature type="region of interest" description="Disordered" evidence="2">
    <location>
        <begin position="55"/>
        <end position="75"/>
    </location>
</feature>
<feature type="region of interest" description="Disordered" evidence="2">
    <location>
        <begin position="318"/>
        <end position="347"/>
    </location>
</feature>
<feature type="compositionally biased region" description="Low complexity" evidence="2">
    <location>
        <begin position="55"/>
        <end position="73"/>
    </location>
</feature>
<feature type="compositionally biased region" description="Low complexity" evidence="2">
    <location>
        <begin position="318"/>
        <end position="346"/>
    </location>
</feature>
<feature type="sequence conflict" description="In Ref. 2; CAA34530." evidence="4" ref="2">
    <original>K</original>
    <variation>E</variation>
    <location>
        <position position="51"/>
    </location>
</feature>
<dbReference type="EMBL" id="AAFI02000003">
    <property type="protein sequence ID" value="EEU04156.1"/>
    <property type="molecule type" value="Genomic_DNA"/>
</dbReference>
<dbReference type="EMBL" id="X16523">
    <property type="protein sequence ID" value="CAA34530.1"/>
    <property type="status" value="ALT_FRAME"/>
    <property type="molecule type" value="mRNA"/>
</dbReference>
<dbReference type="PIR" id="S05356">
    <property type="entry name" value="S05356"/>
</dbReference>
<dbReference type="RefSeq" id="XP_002649206.2">
    <property type="nucleotide sequence ID" value="XM_002649160.1"/>
</dbReference>
<dbReference type="PaxDb" id="44689-DDB0305015"/>
<dbReference type="GeneID" id="8615872"/>
<dbReference type="KEGG" id="ddi:DDB_G0267458"/>
<dbReference type="dictyBase" id="DDB_G0267458"/>
<dbReference type="VEuPathDB" id="AmoebaDB:DDB_G0267458"/>
<dbReference type="eggNOG" id="ENOG502S3F1">
    <property type="taxonomic scope" value="Eukaryota"/>
</dbReference>
<dbReference type="HOGENOM" id="CLU_405694_0_0_1"/>
<dbReference type="InParanoid" id="P14198"/>
<dbReference type="PRO" id="PR:P14198"/>
<dbReference type="Proteomes" id="UP000002195">
    <property type="component" value="Chromosome 1"/>
</dbReference>
<dbReference type="GO" id="GO:0016020">
    <property type="term" value="C:membrane"/>
    <property type="evidence" value="ECO:0007669"/>
    <property type="project" value="UniProtKB-SubCell"/>
</dbReference>
<name>AAC4_DICDI</name>
<accession>P14198</accession>
<accession>C7FZW0</accession>
<accession>Q55GW7</accession>
<protein>
    <recommendedName>
        <fullName>AAC-rich mRNA clone AAC4 protein</fullName>
    </recommendedName>
</protein>
<organism>
    <name type="scientific">Dictyostelium discoideum</name>
    <name type="common">Social amoeba</name>
    <dbReference type="NCBI Taxonomy" id="44689"/>
    <lineage>
        <taxon>Eukaryota</taxon>
        <taxon>Amoebozoa</taxon>
        <taxon>Evosea</taxon>
        <taxon>Eumycetozoa</taxon>
        <taxon>Dictyostelia</taxon>
        <taxon>Dictyosteliales</taxon>
        <taxon>Dictyosteliaceae</taxon>
        <taxon>Dictyostelium</taxon>
    </lineage>
</organism>
<keyword id="KW-0472">Membrane</keyword>
<keyword id="KW-1185">Reference proteome</keyword>
<keyword id="KW-0677">Repeat</keyword>
<keyword id="KW-0812">Transmembrane</keyword>
<keyword id="KW-1133">Transmembrane helix</keyword>